<dbReference type="EC" id="2.1.1.14" evidence="1"/>
<dbReference type="EMBL" id="CP000438">
    <property type="protein sequence ID" value="ABJ11117.1"/>
    <property type="molecule type" value="Genomic_DNA"/>
</dbReference>
<dbReference type="RefSeq" id="WP_003139809.1">
    <property type="nucleotide sequence ID" value="NZ_CP034244.1"/>
</dbReference>
<dbReference type="SMR" id="Q02L76"/>
<dbReference type="KEGG" id="pau:PA14_39590"/>
<dbReference type="PseudoCAP" id="PA14_39590"/>
<dbReference type="HOGENOM" id="CLU_013175_0_0_6"/>
<dbReference type="BioCyc" id="PAER208963:G1G74-3319-MONOMER"/>
<dbReference type="UniPathway" id="UPA00051">
    <property type="reaction ID" value="UER00082"/>
</dbReference>
<dbReference type="Proteomes" id="UP000000653">
    <property type="component" value="Chromosome"/>
</dbReference>
<dbReference type="GO" id="GO:0003871">
    <property type="term" value="F:5-methyltetrahydropteroyltriglutamate-homocysteine S-methyltransferase activity"/>
    <property type="evidence" value="ECO:0007669"/>
    <property type="project" value="UniProtKB-UniRule"/>
</dbReference>
<dbReference type="GO" id="GO:0008270">
    <property type="term" value="F:zinc ion binding"/>
    <property type="evidence" value="ECO:0007669"/>
    <property type="project" value="InterPro"/>
</dbReference>
<dbReference type="GO" id="GO:0009086">
    <property type="term" value="P:methionine biosynthetic process"/>
    <property type="evidence" value="ECO:0007669"/>
    <property type="project" value="UniProtKB-UniRule"/>
</dbReference>
<dbReference type="GO" id="GO:0032259">
    <property type="term" value="P:methylation"/>
    <property type="evidence" value="ECO:0007669"/>
    <property type="project" value="UniProtKB-KW"/>
</dbReference>
<dbReference type="CDD" id="cd03311">
    <property type="entry name" value="CIMS_C_terminal_like"/>
    <property type="match status" value="1"/>
</dbReference>
<dbReference type="CDD" id="cd03312">
    <property type="entry name" value="CIMS_N_terminal_like"/>
    <property type="match status" value="1"/>
</dbReference>
<dbReference type="FunFam" id="3.20.20.210:FF:000002">
    <property type="entry name" value="5-methyltetrahydropteroyltriglutamate--homocysteine methyltransferase"/>
    <property type="match status" value="1"/>
</dbReference>
<dbReference type="FunFam" id="3.20.20.210:FF:000003">
    <property type="entry name" value="5-methyltetrahydropteroyltriglutamate--homocysteine methyltransferase"/>
    <property type="match status" value="1"/>
</dbReference>
<dbReference type="Gene3D" id="3.20.20.210">
    <property type="match status" value="2"/>
</dbReference>
<dbReference type="HAMAP" id="MF_00172">
    <property type="entry name" value="Meth_synth"/>
    <property type="match status" value="1"/>
</dbReference>
<dbReference type="InterPro" id="IPR013215">
    <property type="entry name" value="Cbl-indep_Met_Synth_N"/>
</dbReference>
<dbReference type="InterPro" id="IPR006276">
    <property type="entry name" value="Cobalamin-indep_Met_synthase"/>
</dbReference>
<dbReference type="InterPro" id="IPR002629">
    <property type="entry name" value="Met_Synth_C/arc"/>
</dbReference>
<dbReference type="InterPro" id="IPR038071">
    <property type="entry name" value="UROD/MetE-like_sf"/>
</dbReference>
<dbReference type="NCBIfam" id="TIGR01371">
    <property type="entry name" value="met_syn_B12ind"/>
    <property type="match status" value="1"/>
</dbReference>
<dbReference type="NCBIfam" id="NF003556">
    <property type="entry name" value="PRK05222.1"/>
    <property type="match status" value="1"/>
</dbReference>
<dbReference type="PANTHER" id="PTHR30519">
    <property type="entry name" value="5-METHYLTETRAHYDROPTEROYLTRIGLUTAMATE--HOMOCYSTEINE METHYLTRANSFERASE"/>
    <property type="match status" value="1"/>
</dbReference>
<dbReference type="Pfam" id="PF08267">
    <property type="entry name" value="Meth_synt_1"/>
    <property type="match status" value="1"/>
</dbReference>
<dbReference type="Pfam" id="PF01717">
    <property type="entry name" value="Meth_synt_2"/>
    <property type="match status" value="1"/>
</dbReference>
<dbReference type="PIRSF" id="PIRSF000382">
    <property type="entry name" value="MeTrfase_B12_ind"/>
    <property type="match status" value="1"/>
</dbReference>
<dbReference type="SUPFAM" id="SSF51726">
    <property type="entry name" value="UROD/MetE-like"/>
    <property type="match status" value="2"/>
</dbReference>
<proteinExistence type="inferred from homology"/>
<evidence type="ECO:0000255" key="1">
    <source>
        <dbReference type="HAMAP-Rule" id="MF_00172"/>
    </source>
</evidence>
<sequence length="766" mass="86177">MALAHTLGFPRIGRDRELKKAQEAFWKGELDEAGLRAVGRQLRAAHWQVQKDAGIQLLPVGDFAWYDQVLTHSLTFGVIPERFRAHGEAGPTLHTLFGMARGVSDDSCCGGAHAQEMTKWFDTNYHYLVPEFSADQQFQLSWEQLFEEVDEARALGHQVKPVLIGPLTYLWLGKAKGAEFDRLDLLDRLLPLYGQILRRLAGQGVEWVQIDEPILVLDLPQAWKNAFERAYNLLQSEPLKKLVATYFGGLEDNLGLAANLPVDGLHIDLVRAPEQYPSILDRLPAYKVVSLGLVNGRNVWRCDLEKALEVVRHARERLGERLWVAPSCSLLHSPVDLEREDGLDAELKSWLAFAVQKCREVAVLARAATEPEAAEVLAALEESRAVQASRASSPRIHKPAVQARLAAIKASDAQRRSPFAERIARQRAGLDLPAFPTTTIGSFPQTSSIRLARQSFKQGKLSEAEYIEAMHSEIRHAVQIQEQLGLDVLVHGEAERNDMVEYFAEQLDGYVFTRFGWVQSYGSRCVKPAVIYGDLSRPRAMTVEWIRYAQSLTDKVMKGMLTGPVTMLMWSFPREDVSREVQARQLALAIRDEVVDLEAAGIRIVQIDEAAFREGLPLRRNAWPHYLEWATEAFRLCASGVRDETQIHTHMCYSEFNDVIESIAAMDADVITIETSRSDMELLEAFEQFDYPNEIGPGVYDIHSPRVPSREEIVALLRKAARRIPAERLWVNPDCGLKTRAWPETEAALVNMVAAARELRGDLARG</sequence>
<gene>
    <name evidence="1" type="primary">metE</name>
    <name type="ordered locus">PA14_39590</name>
</gene>
<keyword id="KW-0028">Amino-acid biosynthesis</keyword>
<keyword id="KW-0479">Metal-binding</keyword>
<keyword id="KW-0486">Methionine biosynthesis</keyword>
<keyword id="KW-0489">Methyltransferase</keyword>
<keyword id="KW-0677">Repeat</keyword>
<keyword id="KW-0808">Transferase</keyword>
<keyword id="KW-0862">Zinc</keyword>
<organism>
    <name type="scientific">Pseudomonas aeruginosa (strain UCBPP-PA14)</name>
    <dbReference type="NCBI Taxonomy" id="208963"/>
    <lineage>
        <taxon>Bacteria</taxon>
        <taxon>Pseudomonadati</taxon>
        <taxon>Pseudomonadota</taxon>
        <taxon>Gammaproteobacteria</taxon>
        <taxon>Pseudomonadales</taxon>
        <taxon>Pseudomonadaceae</taxon>
        <taxon>Pseudomonas</taxon>
    </lineage>
</organism>
<feature type="chain" id="PRO_1000017262" description="5-methyltetrahydropteroyltriglutamate--homocysteine methyltransferase">
    <location>
        <begin position="1"/>
        <end position="766"/>
    </location>
</feature>
<feature type="active site" description="Proton donor" evidence="1">
    <location>
        <position position="703"/>
    </location>
</feature>
<feature type="binding site" evidence="1">
    <location>
        <begin position="16"/>
        <end position="19"/>
    </location>
    <ligand>
        <name>5-methyltetrahydropteroyltri-L-glutamate</name>
        <dbReference type="ChEBI" id="CHEBI:58207"/>
    </ligand>
</feature>
<feature type="binding site" evidence="1">
    <location>
        <position position="119"/>
    </location>
    <ligand>
        <name>5-methyltetrahydropteroyltri-L-glutamate</name>
        <dbReference type="ChEBI" id="CHEBI:58207"/>
    </ligand>
</feature>
<feature type="binding site" evidence="1">
    <location>
        <begin position="440"/>
        <end position="442"/>
    </location>
    <ligand>
        <name>L-homocysteine</name>
        <dbReference type="ChEBI" id="CHEBI:58199"/>
    </ligand>
</feature>
<feature type="binding site" evidence="1">
    <location>
        <begin position="440"/>
        <end position="442"/>
    </location>
    <ligand>
        <name>L-methionine</name>
        <dbReference type="ChEBI" id="CHEBI:57844"/>
    </ligand>
</feature>
<feature type="binding site" evidence="1">
    <location>
        <position position="493"/>
    </location>
    <ligand>
        <name>L-homocysteine</name>
        <dbReference type="ChEBI" id="CHEBI:58199"/>
    </ligand>
</feature>
<feature type="binding site" evidence="1">
    <location>
        <position position="493"/>
    </location>
    <ligand>
        <name>L-methionine</name>
        <dbReference type="ChEBI" id="CHEBI:57844"/>
    </ligand>
</feature>
<feature type="binding site" evidence="1">
    <location>
        <begin position="524"/>
        <end position="525"/>
    </location>
    <ligand>
        <name>5-methyltetrahydropteroyltri-L-glutamate</name>
        <dbReference type="ChEBI" id="CHEBI:58207"/>
    </ligand>
</feature>
<feature type="binding site" evidence="1">
    <location>
        <position position="570"/>
    </location>
    <ligand>
        <name>5-methyltetrahydropteroyltri-L-glutamate</name>
        <dbReference type="ChEBI" id="CHEBI:58207"/>
    </ligand>
</feature>
<feature type="binding site" evidence="1">
    <location>
        <position position="608"/>
    </location>
    <ligand>
        <name>L-homocysteine</name>
        <dbReference type="ChEBI" id="CHEBI:58199"/>
    </ligand>
</feature>
<feature type="binding site" evidence="1">
    <location>
        <position position="608"/>
    </location>
    <ligand>
        <name>L-methionine</name>
        <dbReference type="ChEBI" id="CHEBI:57844"/>
    </ligand>
</feature>
<feature type="binding site" evidence="1">
    <location>
        <position position="614"/>
    </location>
    <ligand>
        <name>5-methyltetrahydropteroyltri-L-glutamate</name>
        <dbReference type="ChEBI" id="CHEBI:58207"/>
    </ligand>
</feature>
<feature type="binding site" evidence="1">
    <location>
        <position position="650"/>
    </location>
    <ligand>
        <name>Zn(2+)</name>
        <dbReference type="ChEBI" id="CHEBI:29105"/>
        <note>catalytic</note>
    </ligand>
</feature>
<feature type="binding site" evidence="1">
    <location>
        <position position="652"/>
    </location>
    <ligand>
        <name>Zn(2+)</name>
        <dbReference type="ChEBI" id="CHEBI:29105"/>
        <note>catalytic</note>
    </ligand>
</feature>
<feature type="binding site" evidence="1">
    <location>
        <position position="674"/>
    </location>
    <ligand>
        <name>Zn(2+)</name>
        <dbReference type="ChEBI" id="CHEBI:29105"/>
        <note>catalytic</note>
    </ligand>
</feature>
<feature type="binding site" evidence="1">
    <location>
        <position position="735"/>
    </location>
    <ligand>
        <name>Zn(2+)</name>
        <dbReference type="ChEBI" id="CHEBI:29105"/>
        <note>catalytic</note>
    </ligand>
</feature>
<protein>
    <recommendedName>
        <fullName evidence="1">5-methyltetrahydropteroyltriglutamate--homocysteine methyltransferase</fullName>
        <ecNumber evidence="1">2.1.1.14</ecNumber>
    </recommendedName>
    <alternativeName>
        <fullName evidence="1">Cobalamin-independent methionine synthase</fullName>
    </alternativeName>
    <alternativeName>
        <fullName evidence="1">Methionine synthase, vitamin-B12 independent isozyme</fullName>
    </alternativeName>
</protein>
<reference key="1">
    <citation type="journal article" date="2006" name="Genome Biol.">
        <title>Genomic analysis reveals that Pseudomonas aeruginosa virulence is combinatorial.</title>
        <authorList>
            <person name="Lee D.G."/>
            <person name="Urbach J.M."/>
            <person name="Wu G."/>
            <person name="Liberati N.T."/>
            <person name="Feinbaum R.L."/>
            <person name="Miyata S."/>
            <person name="Diggins L.T."/>
            <person name="He J."/>
            <person name="Saucier M."/>
            <person name="Deziel E."/>
            <person name="Friedman L."/>
            <person name="Li L."/>
            <person name="Grills G."/>
            <person name="Montgomery K."/>
            <person name="Kucherlapati R."/>
            <person name="Rahme L.G."/>
            <person name="Ausubel F.M."/>
        </authorList>
    </citation>
    <scope>NUCLEOTIDE SEQUENCE [LARGE SCALE GENOMIC DNA]</scope>
    <source>
        <strain>UCBPP-PA14</strain>
    </source>
</reference>
<accession>Q02L76</accession>
<name>METE_PSEAB</name>
<comment type="function">
    <text evidence="1">Catalyzes the transfer of a methyl group from 5-methyltetrahydrofolate to homocysteine resulting in methionine formation.</text>
</comment>
<comment type="catalytic activity">
    <reaction evidence="1">
        <text>5-methyltetrahydropteroyltri-L-glutamate + L-homocysteine = tetrahydropteroyltri-L-glutamate + L-methionine</text>
        <dbReference type="Rhea" id="RHEA:21196"/>
        <dbReference type="ChEBI" id="CHEBI:57844"/>
        <dbReference type="ChEBI" id="CHEBI:58140"/>
        <dbReference type="ChEBI" id="CHEBI:58199"/>
        <dbReference type="ChEBI" id="CHEBI:58207"/>
        <dbReference type="EC" id="2.1.1.14"/>
    </reaction>
</comment>
<comment type="cofactor">
    <cofactor evidence="1">
        <name>Zn(2+)</name>
        <dbReference type="ChEBI" id="CHEBI:29105"/>
    </cofactor>
    <text evidence="1">Binds 1 zinc ion per subunit.</text>
</comment>
<comment type="pathway">
    <text evidence="1">Amino-acid biosynthesis; L-methionine biosynthesis via de novo pathway; L-methionine from L-homocysteine (MetE route): step 1/1.</text>
</comment>
<comment type="similarity">
    <text evidence="1">Belongs to the vitamin-B12 independent methionine synthase family.</text>
</comment>